<keyword id="KW-0025">Alternative splicing</keyword>
<keyword id="KW-0225">Disease variant</keyword>
<keyword id="KW-0413">Isomerase</keyword>
<keyword id="KW-0445">Lipid transport</keyword>
<keyword id="KW-0479">Metal-binding</keyword>
<keyword id="KW-0496">Mitochondrion</keyword>
<keyword id="KW-0520">NAD</keyword>
<keyword id="KW-0521">NADP</keyword>
<keyword id="KW-0523">Neurodegeneration</keyword>
<keyword id="KW-0547">Nucleotide-binding</keyword>
<keyword id="KW-0597">Phosphoprotein</keyword>
<keyword id="KW-0630">Potassium</keyword>
<keyword id="KW-1267">Proteomics identification</keyword>
<keyword id="KW-1185">Reference proteome</keyword>
<keyword id="KW-0964">Secreted</keyword>
<keyword id="KW-0809">Transit peptide</keyword>
<keyword id="KW-0813">Transport</keyword>
<evidence type="ECO:0000250" key="1">
    <source>
        <dbReference type="UniProtKB" id="Q8K4Z3"/>
    </source>
</evidence>
<evidence type="ECO:0000255" key="2">
    <source>
        <dbReference type="HAMAP-Rule" id="MF_03159"/>
    </source>
</evidence>
<evidence type="ECO:0000269" key="3">
    <source>
    </source>
</evidence>
<evidence type="ECO:0000269" key="4">
    <source>
    </source>
</evidence>
<evidence type="ECO:0000269" key="5">
    <source>
    </source>
</evidence>
<evidence type="ECO:0000269" key="6">
    <source>
    </source>
</evidence>
<evidence type="ECO:0000269" key="7">
    <source>
    </source>
</evidence>
<evidence type="ECO:0000269" key="8">
    <source>
    </source>
</evidence>
<evidence type="ECO:0000303" key="9">
    <source>
    </source>
</evidence>
<evidence type="ECO:0000303" key="10">
    <source>
    </source>
</evidence>
<evidence type="ECO:0000303" key="11">
    <source>
    </source>
</evidence>
<evidence type="ECO:0000303" key="12">
    <source>
    </source>
</evidence>
<evidence type="ECO:0000305" key="13">
    <source>
    </source>
</evidence>
<evidence type="ECO:0000312" key="14">
    <source>
        <dbReference type="HGNC" id="HGNC:18453"/>
    </source>
</evidence>
<gene>
    <name evidence="14" type="primary">NAXE</name>
    <name evidence="2" type="synonym">AIBP</name>
    <name type="synonym">APOA1BP</name>
    <name type="synonym">YJEFN1</name>
</gene>
<protein>
    <recommendedName>
        <fullName evidence="2">NAD(P)H-hydrate epimerase</fullName>
        <ecNumber evidence="7">5.1.99.6</ecNumber>
    </recommendedName>
    <alternativeName>
        <fullName evidence="2 9">Apolipoprotein A-I-binding protein</fullName>
        <shortName evidence="2 9">AI-BP</shortName>
    </alternativeName>
    <alternativeName>
        <fullName evidence="12">NAD(P)HX epimerase</fullName>
        <shortName evidence="12">NAXE</shortName>
    </alternativeName>
    <alternativeName>
        <fullName>YjeF N-terminal domain-containing protein 1</fullName>
        <shortName>YjeF_N1</shortName>
    </alternativeName>
</protein>
<feature type="transit peptide" description="Mitochondrion" evidence="2">
    <location>
        <begin position="1"/>
        <end position="47"/>
    </location>
</feature>
<feature type="chain" id="PRO_5000067606" description="NAD(P)H-hydrate epimerase">
    <location>
        <begin position="48"/>
        <end position="288"/>
    </location>
</feature>
<feature type="domain" description="YjeF N-terminal" evidence="2">
    <location>
        <begin position="65"/>
        <end position="275"/>
    </location>
</feature>
<feature type="binding site" evidence="2">
    <location>
        <begin position="119"/>
        <end position="123"/>
    </location>
    <ligand>
        <name>(6S)-NADPHX</name>
        <dbReference type="ChEBI" id="CHEBI:64076"/>
    </ligand>
</feature>
<feature type="binding site" evidence="2">
    <location>
        <position position="120"/>
    </location>
    <ligand>
        <name>K(+)</name>
        <dbReference type="ChEBI" id="CHEBI:29103"/>
    </ligand>
</feature>
<feature type="binding site" evidence="2">
    <location>
        <position position="185"/>
    </location>
    <ligand>
        <name>K(+)</name>
        <dbReference type="ChEBI" id="CHEBI:29103"/>
    </ligand>
</feature>
<feature type="binding site" evidence="2">
    <location>
        <begin position="189"/>
        <end position="195"/>
    </location>
    <ligand>
        <name>(6S)-NADPHX</name>
        <dbReference type="ChEBI" id="CHEBI:64076"/>
    </ligand>
</feature>
<feature type="binding site" evidence="2">
    <location>
        <position position="218"/>
    </location>
    <ligand>
        <name>(6S)-NADPHX</name>
        <dbReference type="ChEBI" id="CHEBI:64076"/>
    </ligand>
</feature>
<feature type="binding site" evidence="2">
    <location>
        <position position="221"/>
    </location>
    <ligand>
        <name>K(+)</name>
        <dbReference type="ChEBI" id="CHEBI:29103"/>
    </ligand>
</feature>
<feature type="modified residue" description="Phosphoserine" evidence="1">
    <location>
        <position position="49"/>
    </location>
</feature>
<feature type="modified residue" description="N6-succinyllysine" evidence="1">
    <location>
        <position position="144"/>
    </location>
</feature>
<feature type="splice variant" id="VSP_026417" description="In isoform 2." evidence="10 11">
    <location>
        <begin position="1"/>
        <end position="103"/>
    </location>
</feature>
<feature type="sequence variant" id="VAR_032992" description="In dbSNP:rs7516274." evidence="3 4">
    <original>V</original>
    <variation>L</variation>
    <location>
        <position position="19"/>
    </location>
</feature>
<feature type="sequence variant" id="VAR_085045" description="Found in a patient with progressive myoclonus epilepsy and developmental delay; uncertain significance; dbSNP:rs765587923." evidence="8">
    <location>
        <begin position="43"/>
        <end position="288"/>
    </location>
</feature>
<feature type="sequence variant" id="VAR_077991" description="In PEBEL1; dbSNP:rs879255647." evidence="6">
    <original>A</original>
    <variation>D</variation>
    <location>
        <position position="94"/>
    </location>
</feature>
<feature type="sequence variant" id="VAR_077992" description="In PEBEL1; dbSNP:rs886041064." evidence="7">
    <original>D</original>
    <variation>V</variation>
    <location>
        <position position="218"/>
    </location>
</feature>
<feature type="sequence variant" id="VAR_077993" description="In PEBEL1; dbSNP:rs897694449." evidence="7">
    <location>
        <position position="270"/>
    </location>
</feature>
<dbReference type="EC" id="5.1.99.6" evidence="7"/>
<dbReference type="EMBL" id="AJ315849">
    <property type="protein sequence ID" value="CAC86580.1"/>
    <property type="molecule type" value="mRNA"/>
</dbReference>
<dbReference type="EMBL" id="AK294835">
    <property type="protein sequence ID" value="BAG57944.1"/>
    <property type="molecule type" value="mRNA"/>
</dbReference>
<dbReference type="EMBL" id="AL365181">
    <property type="status" value="NOT_ANNOTATED_CDS"/>
    <property type="molecule type" value="Genomic_DNA"/>
</dbReference>
<dbReference type="EMBL" id="BC100931">
    <property type="protein sequence ID" value="AAI00932.1"/>
    <property type="molecule type" value="mRNA"/>
</dbReference>
<dbReference type="EMBL" id="BC100932">
    <property type="protein sequence ID" value="AAI00933.1"/>
    <property type="molecule type" value="mRNA"/>
</dbReference>
<dbReference type="EMBL" id="BC100933">
    <property type="protein sequence ID" value="AAI00934.1"/>
    <property type="molecule type" value="mRNA"/>
</dbReference>
<dbReference type="EMBL" id="BC100934">
    <property type="protein sequence ID" value="AAI00935.1"/>
    <property type="molecule type" value="mRNA"/>
</dbReference>
<dbReference type="CCDS" id="CCDS1145.1">
    <molecule id="Q8NCW5-1"/>
</dbReference>
<dbReference type="RefSeq" id="NP_658985.2">
    <molecule id="Q8NCW5-1"/>
    <property type="nucleotide sequence ID" value="NM_144772.3"/>
</dbReference>
<dbReference type="SMR" id="Q8NCW5"/>
<dbReference type="BioGRID" id="126103">
    <property type="interactions" value="63"/>
</dbReference>
<dbReference type="FunCoup" id="Q8NCW5">
    <property type="interactions" value="949"/>
</dbReference>
<dbReference type="IntAct" id="Q8NCW5">
    <property type="interactions" value="9"/>
</dbReference>
<dbReference type="MINT" id="Q8NCW5"/>
<dbReference type="STRING" id="9606.ENSP00000357218"/>
<dbReference type="GlyGen" id="Q8NCW5">
    <property type="glycosylation" value="2 sites, 2 O-linked glycans (2 sites)"/>
</dbReference>
<dbReference type="iPTMnet" id="Q8NCW5"/>
<dbReference type="PhosphoSitePlus" id="Q8NCW5"/>
<dbReference type="SwissPalm" id="Q8NCW5"/>
<dbReference type="BioMuta" id="NAXE"/>
<dbReference type="DMDM" id="150438841"/>
<dbReference type="REPRODUCTION-2DPAGE" id="IPI00168479"/>
<dbReference type="CPTAC" id="CPTAC-25"/>
<dbReference type="CPTAC" id="CPTAC-26"/>
<dbReference type="jPOST" id="Q8NCW5"/>
<dbReference type="MassIVE" id="Q8NCW5"/>
<dbReference type="PaxDb" id="9606-ENSP00000357218"/>
<dbReference type="PeptideAtlas" id="Q8NCW5"/>
<dbReference type="ProteomicsDB" id="72958">
    <molecule id="Q8NCW5-1"/>
</dbReference>
<dbReference type="ProteomicsDB" id="72959">
    <molecule id="Q8NCW5-2"/>
</dbReference>
<dbReference type="Pumba" id="Q8NCW5"/>
<dbReference type="TopDownProteomics" id="Q8NCW5-1">
    <molecule id="Q8NCW5-1"/>
</dbReference>
<dbReference type="TopDownProteomics" id="Q8NCW5-2">
    <molecule id="Q8NCW5-2"/>
</dbReference>
<dbReference type="Antibodypedia" id="34221">
    <property type="antibodies" value="214 antibodies from 28 providers"/>
</dbReference>
<dbReference type="DNASU" id="128240"/>
<dbReference type="Ensembl" id="ENST00000368235.8">
    <molecule id="Q8NCW5-1"/>
    <property type="protein sequence ID" value="ENSP00000357218.3"/>
    <property type="gene ID" value="ENSG00000163382.13"/>
</dbReference>
<dbReference type="Ensembl" id="ENST00000679702.1">
    <molecule id="Q8NCW5-1"/>
    <property type="protein sequence ID" value="ENSP00000505913.1"/>
    <property type="gene ID" value="ENSG00000163382.13"/>
</dbReference>
<dbReference type="Ensembl" id="ENST00000680004.1">
    <molecule id="Q8NCW5-1"/>
    <property type="protein sequence ID" value="ENSP00000506275.1"/>
    <property type="gene ID" value="ENSG00000163382.13"/>
</dbReference>
<dbReference type="Ensembl" id="ENST00000680269.1">
    <molecule id="Q8NCW5-1"/>
    <property type="protein sequence ID" value="ENSP00000505899.1"/>
    <property type="gene ID" value="ENSG00000163382.13"/>
</dbReference>
<dbReference type="Ensembl" id="ENST00000681054.1">
    <molecule id="Q8NCW5-1"/>
    <property type="protein sequence ID" value="ENSP00000506192.1"/>
    <property type="gene ID" value="ENSG00000163382.13"/>
</dbReference>
<dbReference type="Ensembl" id="ENST00000681523.1">
    <molecule id="Q8NCW5-1"/>
    <property type="protein sequence ID" value="ENSP00000505349.1"/>
    <property type="gene ID" value="ENSG00000163382.13"/>
</dbReference>
<dbReference type="GeneID" id="128240"/>
<dbReference type="KEGG" id="hsa:128240"/>
<dbReference type="MANE-Select" id="ENST00000368235.8">
    <property type="protein sequence ID" value="ENSP00000357218.3"/>
    <property type="RefSeq nucleotide sequence ID" value="NM_144772.3"/>
    <property type="RefSeq protein sequence ID" value="NP_658985.2"/>
</dbReference>
<dbReference type="UCSC" id="uc001fph.4">
    <molecule id="Q8NCW5-1"/>
    <property type="organism name" value="human"/>
</dbReference>
<dbReference type="AGR" id="HGNC:18453"/>
<dbReference type="CTD" id="128240"/>
<dbReference type="DisGeNET" id="128240"/>
<dbReference type="GeneCards" id="NAXE"/>
<dbReference type="HGNC" id="HGNC:18453">
    <property type="gene designation" value="NAXE"/>
</dbReference>
<dbReference type="HPA" id="ENSG00000163382">
    <property type="expression patterns" value="Low tissue specificity"/>
</dbReference>
<dbReference type="MalaCards" id="NAXE"/>
<dbReference type="MIM" id="608862">
    <property type="type" value="gene"/>
</dbReference>
<dbReference type="MIM" id="617186">
    <property type="type" value="phenotype"/>
</dbReference>
<dbReference type="neXtProt" id="NX_Q8NCW5"/>
<dbReference type="OpenTargets" id="ENSG00000163382"/>
<dbReference type="Orphanet" id="555407">
    <property type="disease" value="NAD(P)HX epimerase deficiency"/>
</dbReference>
<dbReference type="PharmGKB" id="PA38538"/>
<dbReference type="VEuPathDB" id="HostDB:ENSG00000163382"/>
<dbReference type="eggNOG" id="KOG2585">
    <property type="taxonomic scope" value="Eukaryota"/>
</dbReference>
<dbReference type="GeneTree" id="ENSGT00390000007227"/>
<dbReference type="HOGENOM" id="CLU_024853_3_0_1"/>
<dbReference type="InParanoid" id="Q8NCW5"/>
<dbReference type="OMA" id="RHLFHYG"/>
<dbReference type="OrthoDB" id="10064708at2759"/>
<dbReference type="PAN-GO" id="Q8NCW5">
    <property type="GO annotations" value="2 GO annotations based on evolutionary models"/>
</dbReference>
<dbReference type="PhylomeDB" id="Q8NCW5"/>
<dbReference type="TreeFam" id="TF300197"/>
<dbReference type="BioCyc" id="MetaCyc:ENSG00000163382-MONOMER"/>
<dbReference type="BRENDA" id="5.1.99.6">
    <property type="organism ID" value="2681"/>
</dbReference>
<dbReference type="PathwayCommons" id="Q8NCW5"/>
<dbReference type="Reactome" id="R-HSA-197264">
    <property type="pathway name" value="Nicotinamide salvaging"/>
</dbReference>
<dbReference type="SignaLink" id="Q8NCW5"/>
<dbReference type="BioGRID-ORCS" id="128240">
    <property type="hits" value="7 hits in 1147 CRISPR screens"/>
</dbReference>
<dbReference type="CD-CODE" id="8C2F96ED">
    <property type="entry name" value="Centrosome"/>
</dbReference>
<dbReference type="ChiTaRS" id="NAXE">
    <property type="organism name" value="human"/>
</dbReference>
<dbReference type="GenomeRNAi" id="128240"/>
<dbReference type="Pharos" id="Q8NCW5">
    <property type="development level" value="Tbio"/>
</dbReference>
<dbReference type="PRO" id="PR:Q8NCW5"/>
<dbReference type="Proteomes" id="UP000005640">
    <property type="component" value="Chromosome 1"/>
</dbReference>
<dbReference type="RNAct" id="Q8NCW5">
    <property type="molecule type" value="protein"/>
</dbReference>
<dbReference type="Bgee" id="ENSG00000163382">
    <property type="expression patterns" value="Expressed in apex of heart and 185 other cell types or tissues"/>
</dbReference>
<dbReference type="ExpressionAtlas" id="Q8NCW5">
    <property type="expression patterns" value="baseline and differential"/>
</dbReference>
<dbReference type="GO" id="GO:0044297">
    <property type="term" value="C:cell body"/>
    <property type="evidence" value="ECO:0007669"/>
    <property type="project" value="Ensembl"/>
</dbReference>
<dbReference type="GO" id="GO:0005929">
    <property type="term" value="C:cilium"/>
    <property type="evidence" value="ECO:0007669"/>
    <property type="project" value="Ensembl"/>
</dbReference>
<dbReference type="GO" id="GO:0005829">
    <property type="term" value="C:cytosol"/>
    <property type="evidence" value="ECO:0007669"/>
    <property type="project" value="Ensembl"/>
</dbReference>
<dbReference type="GO" id="GO:0070062">
    <property type="term" value="C:extracellular exosome"/>
    <property type="evidence" value="ECO:0007005"/>
    <property type="project" value="UniProtKB"/>
</dbReference>
<dbReference type="GO" id="GO:0005576">
    <property type="term" value="C:extracellular region"/>
    <property type="evidence" value="ECO:0000314"/>
    <property type="project" value="UniProtKB"/>
</dbReference>
<dbReference type="GO" id="GO:0005615">
    <property type="term" value="C:extracellular space"/>
    <property type="evidence" value="ECO:0000250"/>
    <property type="project" value="BHF-UCL"/>
</dbReference>
<dbReference type="GO" id="GO:0005759">
    <property type="term" value="C:mitochondrial matrix"/>
    <property type="evidence" value="ECO:0000304"/>
    <property type="project" value="Reactome"/>
</dbReference>
<dbReference type="GO" id="GO:0005739">
    <property type="term" value="C:mitochondrion"/>
    <property type="evidence" value="ECO:0006056"/>
    <property type="project" value="FlyBase"/>
</dbReference>
<dbReference type="GO" id="GO:0005634">
    <property type="term" value="C:nucleus"/>
    <property type="evidence" value="ECO:0007669"/>
    <property type="project" value="Ensembl"/>
</dbReference>
<dbReference type="GO" id="GO:0042802">
    <property type="term" value="F:identical protein binding"/>
    <property type="evidence" value="ECO:0007669"/>
    <property type="project" value="Ensembl"/>
</dbReference>
<dbReference type="GO" id="GO:0046872">
    <property type="term" value="F:metal ion binding"/>
    <property type="evidence" value="ECO:0007669"/>
    <property type="project" value="UniProtKB-KW"/>
</dbReference>
<dbReference type="GO" id="GO:0052856">
    <property type="term" value="F:NAD(P)HX epimerase activity"/>
    <property type="evidence" value="ECO:0000318"/>
    <property type="project" value="GO_Central"/>
</dbReference>
<dbReference type="GO" id="GO:0000166">
    <property type="term" value="F:nucleotide binding"/>
    <property type="evidence" value="ECO:0007669"/>
    <property type="project" value="UniProtKB-KW"/>
</dbReference>
<dbReference type="GO" id="GO:0006869">
    <property type="term" value="P:lipid transport"/>
    <property type="evidence" value="ECO:0007669"/>
    <property type="project" value="UniProtKB-KW"/>
</dbReference>
<dbReference type="GO" id="GO:0031580">
    <property type="term" value="P:membrane raft distribution"/>
    <property type="evidence" value="ECO:0000315"/>
    <property type="project" value="UniProtKB"/>
</dbReference>
<dbReference type="GO" id="GO:0110051">
    <property type="term" value="P:metabolite repair"/>
    <property type="evidence" value="ECO:0007669"/>
    <property type="project" value="Ensembl"/>
</dbReference>
<dbReference type="GO" id="GO:0016525">
    <property type="term" value="P:negative regulation of angiogenesis"/>
    <property type="evidence" value="ECO:0000315"/>
    <property type="project" value="UniProtKB"/>
</dbReference>
<dbReference type="GO" id="GO:0046496">
    <property type="term" value="P:nicotinamide nucleotide metabolic process"/>
    <property type="evidence" value="ECO:0000315"/>
    <property type="project" value="UniProtKB"/>
</dbReference>
<dbReference type="GO" id="GO:0010874">
    <property type="term" value="P:regulation of cholesterol efflux"/>
    <property type="evidence" value="ECO:0000315"/>
    <property type="project" value="UniProtKB"/>
</dbReference>
<dbReference type="GO" id="GO:0002040">
    <property type="term" value="P:sprouting angiogenesis"/>
    <property type="evidence" value="ECO:0000315"/>
    <property type="project" value="UniProtKB"/>
</dbReference>
<dbReference type="FunFam" id="3.40.50.10260:FF:000002">
    <property type="entry name" value="NAD(P)H-hydrate epimerase"/>
    <property type="match status" value="1"/>
</dbReference>
<dbReference type="Gene3D" id="3.40.50.10260">
    <property type="entry name" value="YjeF N-terminal domain"/>
    <property type="match status" value="1"/>
</dbReference>
<dbReference type="HAMAP" id="MF_01966">
    <property type="entry name" value="NADHX_epimerase"/>
    <property type="match status" value="1"/>
</dbReference>
<dbReference type="InterPro" id="IPR004443">
    <property type="entry name" value="YjeF_N_dom"/>
</dbReference>
<dbReference type="InterPro" id="IPR036652">
    <property type="entry name" value="YjeF_N_dom_sf"/>
</dbReference>
<dbReference type="InterPro" id="IPR032976">
    <property type="entry name" value="YJEFN_prot_NAXE-like"/>
</dbReference>
<dbReference type="NCBIfam" id="TIGR00197">
    <property type="entry name" value="yjeF_nterm"/>
    <property type="match status" value="1"/>
</dbReference>
<dbReference type="PANTHER" id="PTHR13232">
    <property type="entry name" value="NAD(P)H-HYDRATE EPIMERASE"/>
    <property type="match status" value="1"/>
</dbReference>
<dbReference type="PANTHER" id="PTHR13232:SF11">
    <property type="entry name" value="NAD(P)H-HYDRATE EPIMERASE"/>
    <property type="match status" value="1"/>
</dbReference>
<dbReference type="Pfam" id="PF03853">
    <property type="entry name" value="YjeF_N"/>
    <property type="match status" value="1"/>
</dbReference>
<dbReference type="SUPFAM" id="SSF64153">
    <property type="entry name" value="YjeF N-terminal domain-like"/>
    <property type="match status" value="1"/>
</dbReference>
<dbReference type="PROSITE" id="PS51385">
    <property type="entry name" value="YJEF_N"/>
    <property type="match status" value="1"/>
</dbReference>
<name>NNRE_HUMAN</name>
<proteinExistence type="evidence at protein level"/>
<sequence>MSRLRALLGLGLLVAGSRVPRIKSQTIACRSGPTWWGPQRLNSGGRWDSEVMASTVVKYLSQEEAQAVDQELFNEYQFSVDQLMELAGLSCATAIAKAYPPTSMSRSPPTVLVICGPGNNGGDGLVCARHLKLFGYEPTIYYPKRPNKPLFTALVTQCQKMDIPFLGEMPAEPMTIDELYELVVDAIFGFSFKGDVREPFHSILSVLKGLTVPIASIDIPSGWDVEKGNAGGIQPDLLISLTAPKKSATQFTGRYHYLGGRFVPPALEKKYQLNLPPYPDTECVYRLQ</sequence>
<organism>
    <name type="scientific">Homo sapiens</name>
    <name type="common">Human</name>
    <dbReference type="NCBI Taxonomy" id="9606"/>
    <lineage>
        <taxon>Eukaryota</taxon>
        <taxon>Metazoa</taxon>
        <taxon>Chordata</taxon>
        <taxon>Craniata</taxon>
        <taxon>Vertebrata</taxon>
        <taxon>Euteleostomi</taxon>
        <taxon>Mammalia</taxon>
        <taxon>Eutheria</taxon>
        <taxon>Euarchontoglires</taxon>
        <taxon>Primates</taxon>
        <taxon>Haplorrhini</taxon>
        <taxon>Catarrhini</taxon>
        <taxon>Hominidae</taxon>
        <taxon>Homo</taxon>
    </lineage>
</organism>
<accession>Q8NCW5</accession>
<accession>B4DGY3</accession>
<accession>Q496C6</accession>
<accession>Q5T3I2</accession>
<comment type="function">
    <text evidence="2 5 7">Catalyzes the epimerization of the S- and R-forms of NAD(P)HX, a damaged form of NAD(P)H that is a result of enzymatic or heat-dependent hydration (By similarity) (PubMed:27616477). This is a prerequisite for the S-specific NAD(P)H-hydrate dehydratase to allow the repair of both epimers of NAD(P)HX (By similarity). Accelerates cholesterol efflux from endothelial cells to high-density lipoprotein (HDL) and thereby regulates angiogenesis (PubMed:23719382).</text>
</comment>
<comment type="catalytic activity">
    <reaction evidence="7">
        <text>(6R)-NADHX = (6S)-NADHX</text>
        <dbReference type="Rhea" id="RHEA:32215"/>
        <dbReference type="ChEBI" id="CHEBI:64074"/>
        <dbReference type="ChEBI" id="CHEBI:64075"/>
        <dbReference type="EC" id="5.1.99.6"/>
    </reaction>
</comment>
<comment type="catalytic activity">
    <reaction evidence="13">
        <text>(6R)-NADPHX = (6S)-NADPHX</text>
        <dbReference type="Rhea" id="RHEA:32227"/>
        <dbReference type="ChEBI" id="CHEBI:64076"/>
        <dbReference type="ChEBI" id="CHEBI:64077"/>
        <dbReference type="EC" id="5.1.99.6"/>
    </reaction>
</comment>
<comment type="cofactor">
    <cofactor evidence="2">
        <name>K(+)</name>
        <dbReference type="ChEBI" id="CHEBI:29103"/>
    </cofactor>
    <text evidence="2">Binds 1 potassium ion per subunit.</text>
</comment>
<comment type="subunit">
    <text evidence="2 3 5">Homodimer (By similarity). Interacts with APOA1 and APOA2.</text>
</comment>
<comment type="subcellular location">
    <subcellularLocation>
        <location evidence="2">Mitochondrion</location>
    </subcellularLocation>
    <subcellularLocation>
        <location evidence="2 3">Secreted</location>
    </subcellularLocation>
    <text evidence="2">In sperm, secretion gradually increases during capacitation.</text>
</comment>
<comment type="alternative products">
    <event type="alternative splicing"/>
    <isoform>
        <id>Q8NCW5-1</id>
        <name>1</name>
        <sequence type="displayed"/>
    </isoform>
    <isoform>
        <id>Q8NCW5-2</id>
        <name>2</name>
        <sequence type="described" ref="VSP_026417"/>
    </isoform>
</comment>
<comment type="tissue specificity">
    <text evidence="3">Ubiquitously expressed, with highest levels in kidney, heart and liver. Present in cerebrospinal fluid and urine but not in serum from healthy patients. Present in serum of sepsis patients (at protein level).</text>
</comment>
<comment type="PTM">
    <text evidence="2">Undergoes physiological phosphorylation during sperm capacitation, downstream to PKA activation.</text>
</comment>
<comment type="disease" evidence="6 7">
    <disease id="DI-04879">
        <name>Encephalopathy, progressive, early-onset, with brain edema and/or leukoencephalopathy 1</name>
        <acronym>PEBEL1</acronym>
        <description>An autosomal recessive severe neurometabolic disorder characterized by severe leukoencephalopathy usually associated with a trivial febrile illness. Affected infants tend to show normal early development followed by acute psychomotor regression with ataxia, hypotonia, respiratory insufficiency, and seizures. Disease course is rapidly progressive, leading to coma, global brain atrophy, and death in the first years of life. Brain imaging shows multiple abnormalities, including brain edema and signal abnormalities in the cortical and subcortical regions.</description>
        <dbReference type="MIM" id="617186"/>
    </disease>
    <text>The disease is caused by variants affecting the gene represented in this entry.</text>
</comment>
<comment type="similarity">
    <text evidence="2">Belongs to the NnrE/AIBP family.</text>
</comment>
<reference key="1">
    <citation type="journal article" date="2002" name="Genomics">
        <title>Cloning and characterization of a novel apolipoprotein A-I-binding protein, AI-BP, secreted by cells of the kidney proximal tubules in response to HDL or ApoA-I.</title>
        <authorList>
            <person name="Ritter M."/>
            <person name="Buechler C."/>
            <person name="Boettcher A."/>
            <person name="Barlage S."/>
            <person name="Schmitz-Madry A."/>
            <person name="Orso E."/>
            <person name="Bared S.M."/>
            <person name="Schmiedeknecht G."/>
            <person name="Baehr C.H."/>
            <person name="Fricker G."/>
            <person name="Schmitz G."/>
        </authorList>
    </citation>
    <scope>NUCLEOTIDE SEQUENCE [MRNA] (ISOFORM 1)</scope>
    <scope>VARIANT LEU-19</scope>
    <scope>TISSUE SPECIFICITY</scope>
    <scope>INTERACTION WITH APOA1 AND APOA2</scope>
    <scope>SUBCELLULAR LOCATION</scope>
    <source>
        <tissue>Liver</tissue>
    </source>
</reference>
<reference key="2">
    <citation type="journal article" date="2004" name="Nat. Genet.">
        <title>Complete sequencing and characterization of 21,243 full-length human cDNAs.</title>
        <authorList>
            <person name="Ota T."/>
            <person name="Suzuki Y."/>
            <person name="Nishikawa T."/>
            <person name="Otsuki T."/>
            <person name="Sugiyama T."/>
            <person name="Irie R."/>
            <person name="Wakamatsu A."/>
            <person name="Hayashi K."/>
            <person name="Sato H."/>
            <person name="Nagai K."/>
            <person name="Kimura K."/>
            <person name="Makita H."/>
            <person name="Sekine M."/>
            <person name="Obayashi M."/>
            <person name="Nishi T."/>
            <person name="Shibahara T."/>
            <person name="Tanaka T."/>
            <person name="Ishii S."/>
            <person name="Yamamoto J."/>
            <person name="Saito K."/>
            <person name="Kawai Y."/>
            <person name="Isono Y."/>
            <person name="Nakamura Y."/>
            <person name="Nagahari K."/>
            <person name="Murakami K."/>
            <person name="Yasuda T."/>
            <person name="Iwayanagi T."/>
            <person name="Wagatsuma M."/>
            <person name="Shiratori A."/>
            <person name="Sudo H."/>
            <person name="Hosoiri T."/>
            <person name="Kaku Y."/>
            <person name="Kodaira H."/>
            <person name="Kondo H."/>
            <person name="Sugawara M."/>
            <person name="Takahashi M."/>
            <person name="Kanda K."/>
            <person name="Yokoi T."/>
            <person name="Furuya T."/>
            <person name="Kikkawa E."/>
            <person name="Omura Y."/>
            <person name="Abe K."/>
            <person name="Kamihara K."/>
            <person name="Katsuta N."/>
            <person name="Sato K."/>
            <person name="Tanikawa M."/>
            <person name="Yamazaki M."/>
            <person name="Ninomiya K."/>
            <person name="Ishibashi T."/>
            <person name="Yamashita H."/>
            <person name="Murakawa K."/>
            <person name="Fujimori K."/>
            <person name="Tanai H."/>
            <person name="Kimata M."/>
            <person name="Watanabe M."/>
            <person name="Hiraoka S."/>
            <person name="Chiba Y."/>
            <person name="Ishida S."/>
            <person name="Ono Y."/>
            <person name="Takiguchi S."/>
            <person name="Watanabe S."/>
            <person name="Yosida M."/>
            <person name="Hotuta T."/>
            <person name="Kusano J."/>
            <person name="Kanehori K."/>
            <person name="Takahashi-Fujii A."/>
            <person name="Hara H."/>
            <person name="Tanase T.-O."/>
            <person name="Nomura Y."/>
            <person name="Togiya S."/>
            <person name="Komai F."/>
            <person name="Hara R."/>
            <person name="Takeuchi K."/>
            <person name="Arita M."/>
            <person name="Imose N."/>
            <person name="Musashino K."/>
            <person name="Yuuki H."/>
            <person name="Oshima A."/>
            <person name="Sasaki N."/>
            <person name="Aotsuka S."/>
            <person name="Yoshikawa Y."/>
            <person name="Matsunawa H."/>
            <person name="Ichihara T."/>
            <person name="Shiohata N."/>
            <person name="Sano S."/>
            <person name="Moriya S."/>
            <person name="Momiyama H."/>
            <person name="Satoh N."/>
            <person name="Takami S."/>
            <person name="Terashima Y."/>
            <person name="Suzuki O."/>
            <person name="Nakagawa S."/>
            <person name="Senoh A."/>
            <person name="Mizoguchi H."/>
            <person name="Goto Y."/>
            <person name="Shimizu F."/>
            <person name="Wakebe H."/>
            <person name="Hishigaki H."/>
            <person name="Watanabe T."/>
            <person name="Sugiyama A."/>
            <person name="Takemoto M."/>
            <person name="Kawakami B."/>
            <person name="Yamazaki M."/>
            <person name="Watanabe K."/>
            <person name="Kumagai A."/>
            <person name="Itakura S."/>
            <person name="Fukuzumi Y."/>
            <person name="Fujimori Y."/>
            <person name="Komiyama M."/>
            <person name="Tashiro H."/>
            <person name="Tanigami A."/>
            <person name="Fujiwara T."/>
            <person name="Ono T."/>
            <person name="Yamada K."/>
            <person name="Fujii Y."/>
            <person name="Ozaki K."/>
            <person name="Hirao M."/>
            <person name="Ohmori Y."/>
            <person name="Kawabata A."/>
            <person name="Hikiji T."/>
            <person name="Kobatake N."/>
            <person name="Inagaki H."/>
            <person name="Ikema Y."/>
            <person name="Okamoto S."/>
            <person name="Okitani R."/>
            <person name="Kawakami T."/>
            <person name="Noguchi S."/>
            <person name="Itoh T."/>
            <person name="Shigeta K."/>
            <person name="Senba T."/>
            <person name="Matsumura K."/>
            <person name="Nakajima Y."/>
            <person name="Mizuno T."/>
            <person name="Morinaga M."/>
            <person name="Sasaki M."/>
            <person name="Togashi T."/>
            <person name="Oyama M."/>
            <person name="Hata H."/>
            <person name="Watanabe M."/>
            <person name="Komatsu T."/>
            <person name="Mizushima-Sugano J."/>
            <person name="Satoh T."/>
            <person name="Shirai Y."/>
            <person name="Takahashi Y."/>
            <person name="Nakagawa K."/>
            <person name="Okumura K."/>
            <person name="Nagase T."/>
            <person name="Nomura N."/>
            <person name="Kikuchi H."/>
            <person name="Masuho Y."/>
            <person name="Yamashita R."/>
            <person name="Nakai K."/>
            <person name="Yada T."/>
            <person name="Nakamura Y."/>
            <person name="Ohara O."/>
            <person name="Isogai T."/>
            <person name="Sugano S."/>
        </authorList>
    </citation>
    <scope>NUCLEOTIDE SEQUENCE [LARGE SCALE MRNA] (ISOFORM 2)</scope>
    <source>
        <tissue>Brain</tissue>
    </source>
</reference>
<reference key="3">
    <citation type="journal article" date="2006" name="Nature">
        <title>The DNA sequence and biological annotation of human chromosome 1.</title>
        <authorList>
            <person name="Gregory S.G."/>
            <person name="Barlow K.F."/>
            <person name="McLay K.E."/>
            <person name="Kaul R."/>
            <person name="Swarbreck D."/>
            <person name="Dunham A."/>
            <person name="Scott C.E."/>
            <person name="Howe K.L."/>
            <person name="Woodfine K."/>
            <person name="Spencer C.C.A."/>
            <person name="Jones M.C."/>
            <person name="Gillson C."/>
            <person name="Searle S."/>
            <person name="Zhou Y."/>
            <person name="Kokocinski F."/>
            <person name="McDonald L."/>
            <person name="Evans R."/>
            <person name="Phillips K."/>
            <person name="Atkinson A."/>
            <person name="Cooper R."/>
            <person name="Jones C."/>
            <person name="Hall R.E."/>
            <person name="Andrews T.D."/>
            <person name="Lloyd C."/>
            <person name="Ainscough R."/>
            <person name="Almeida J.P."/>
            <person name="Ambrose K.D."/>
            <person name="Anderson F."/>
            <person name="Andrew R.W."/>
            <person name="Ashwell R.I.S."/>
            <person name="Aubin K."/>
            <person name="Babbage A.K."/>
            <person name="Bagguley C.L."/>
            <person name="Bailey J."/>
            <person name="Beasley H."/>
            <person name="Bethel G."/>
            <person name="Bird C.P."/>
            <person name="Bray-Allen S."/>
            <person name="Brown J.Y."/>
            <person name="Brown A.J."/>
            <person name="Buckley D."/>
            <person name="Burton J."/>
            <person name="Bye J."/>
            <person name="Carder C."/>
            <person name="Chapman J.C."/>
            <person name="Clark S.Y."/>
            <person name="Clarke G."/>
            <person name="Clee C."/>
            <person name="Cobley V."/>
            <person name="Collier R.E."/>
            <person name="Corby N."/>
            <person name="Coville G.J."/>
            <person name="Davies J."/>
            <person name="Deadman R."/>
            <person name="Dunn M."/>
            <person name="Earthrowl M."/>
            <person name="Ellington A.G."/>
            <person name="Errington H."/>
            <person name="Frankish A."/>
            <person name="Frankland J."/>
            <person name="French L."/>
            <person name="Garner P."/>
            <person name="Garnett J."/>
            <person name="Gay L."/>
            <person name="Ghori M.R.J."/>
            <person name="Gibson R."/>
            <person name="Gilby L.M."/>
            <person name="Gillett W."/>
            <person name="Glithero R.J."/>
            <person name="Grafham D.V."/>
            <person name="Griffiths C."/>
            <person name="Griffiths-Jones S."/>
            <person name="Grocock R."/>
            <person name="Hammond S."/>
            <person name="Harrison E.S.I."/>
            <person name="Hart E."/>
            <person name="Haugen E."/>
            <person name="Heath P.D."/>
            <person name="Holmes S."/>
            <person name="Holt K."/>
            <person name="Howden P.J."/>
            <person name="Hunt A.R."/>
            <person name="Hunt S.E."/>
            <person name="Hunter G."/>
            <person name="Isherwood J."/>
            <person name="James R."/>
            <person name="Johnson C."/>
            <person name="Johnson D."/>
            <person name="Joy A."/>
            <person name="Kay M."/>
            <person name="Kershaw J.K."/>
            <person name="Kibukawa M."/>
            <person name="Kimberley A.M."/>
            <person name="King A."/>
            <person name="Knights A.J."/>
            <person name="Lad H."/>
            <person name="Laird G."/>
            <person name="Lawlor S."/>
            <person name="Leongamornlert D.A."/>
            <person name="Lloyd D.M."/>
            <person name="Loveland J."/>
            <person name="Lovell J."/>
            <person name="Lush M.J."/>
            <person name="Lyne R."/>
            <person name="Martin S."/>
            <person name="Mashreghi-Mohammadi M."/>
            <person name="Matthews L."/>
            <person name="Matthews N.S.W."/>
            <person name="McLaren S."/>
            <person name="Milne S."/>
            <person name="Mistry S."/>
            <person name="Moore M.J.F."/>
            <person name="Nickerson T."/>
            <person name="O'Dell C.N."/>
            <person name="Oliver K."/>
            <person name="Palmeiri A."/>
            <person name="Palmer S.A."/>
            <person name="Parker A."/>
            <person name="Patel D."/>
            <person name="Pearce A.V."/>
            <person name="Peck A.I."/>
            <person name="Pelan S."/>
            <person name="Phelps K."/>
            <person name="Phillimore B.J."/>
            <person name="Plumb R."/>
            <person name="Rajan J."/>
            <person name="Raymond C."/>
            <person name="Rouse G."/>
            <person name="Saenphimmachak C."/>
            <person name="Sehra H.K."/>
            <person name="Sheridan E."/>
            <person name="Shownkeen R."/>
            <person name="Sims S."/>
            <person name="Skuce C.D."/>
            <person name="Smith M."/>
            <person name="Steward C."/>
            <person name="Subramanian S."/>
            <person name="Sycamore N."/>
            <person name="Tracey A."/>
            <person name="Tromans A."/>
            <person name="Van Helmond Z."/>
            <person name="Wall M."/>
            <person name="Wallis J.M."/>
            <person name="White S."/>
            <person name="Whitehead S.L."/>
            <person name="Wilkinson J.E."/>
            <person name="Willey D.L."/>
            <person name="Williams H."/>
            <person name="Wilming L."/>
            <person name="Wray P.W."/>
            <person name="Wu Z."/>
            <person name="Coulson A."/>
            <person name="Vaudin M."/>
            <person name="Sulston J.E."/>
            <person name="Durbin R.M."/>
            <person name="Hubbard T."/>
            <person name="Wooster R."/>
            <person name="Dunham I."/>
            <person name="Carter N.P."/>
            <person name="McVean G."/>
            <person name="Ross M.T."/>
            <person name="Harrow J."/>
            <person name="Olson M.V."/>
            <person name="Beck S."/>
            <person name="Rogers J."/>
            <person name="Bentley D.R."/>
        </authorList>
    </citation>
    <scope>NUCLEOTIDE SEQUENCE [LARGE SCALE GENOMIC DNA]</scope>
</reference>
<reference key="4">
    <citation type="journal article" date="2004" name="Genome Res.">
        <title>The status, quality, and expansion of the NIH full-length cDNA project: the Mammalian Gene Collection (MGC).</title>
        <authorList>
            <consortium name="The MGC Project Team"/>
        </authorList>
    </citation>
    <scope>NUCLEOTIDE SEQUENCE [LARGE SCALE MRNA] (ISOFORMS 1 AND 2)</scope>
    <scope>VARIANT LEU-19</scope>
</reference>
<reference key="5">
    <citation type="journal article" date="2011" name="BMC Syst. Biol.">
        <title>Initial characterization of the human central proteome.</title>
        <authorList>
            <person name="Burkard T.R."/>
            <person name="Planyavsky M."/>
            <person name="Kaupe I."/>
            <person name="Breitwieser F.P."/>
            <person name="Buerckstuemmer T."/>
            <person name="Bennett K.L."/>
            <person name="Superti-Furga G."/>
            <person name="Colinge J."/>
        </authorList>
    </citation>
    <scope>IDENTIFICATION BY MASS SPECTROMETRY [LARGE SCALE ANALYSIS]</scope>
</reference>
<reference key="6">
    <citation type="journal article" date="2013" name="Nature">
        <title>Control of angiogenesis by AIBP-mediated cholesterol efflux.</title>
        <authorList>
            <person name="Fang L."/>
            <person name="Choi S.H."/>
            <person name="Baek J.S."/>
            <person name="Liu C."/>
            <person name="Almazan F."/>
            <person name="Ulrich F."/>
            <person name="Wiesner P."/>
            <person name="Taleb A."/>
            <person name="Deer E."/>
            <person name="Pattison J."/>
            <person name="Torres-Vazquez J."/>
            <person name="Li A.C."/>
            <person name="Miller Y.I."/>
        </authorList>
    </citation>
    <scope>FUNCTION</scope>
    <scope>INTERACTION WITH APOA1</scope>
</reference>
<reference key="7">
    <citation type="journal article" date="2015" name="Proteomics">
        <title>N-terminome analysis of the human mitochondrial proteome.</title>
        <authorList>
            <person name="Vaca Jacome A.S."/>
            <person name="Rabilloud T."/>
            <person name="Schaeffer-Reiss C."/>
            <person name="Rompais M."/>
            <person name="Ayoub D."/>
            <person name="Lane L."/>
            <person name="Bairoch A."/>
            <person name="Van Dorsselaer A."/>
            <person name="Carapito C."/>
        </authorList>
    </citation>
    <scope>IDENTIFICATION BY MASS SPECTROMETRY [LARGE SCALE ANALYSIS]</scope>
</reference>
<reference key="8">
    <citation type="journal article" date="2016" name="Am. J. Hum. Genet.">
        <title>NAXE mutations disrupt the cellular NAD(P)HX repair system and cause a lethal neurometabolic disorder of early childhood.</title>
        <authorList>
            <person name="Kremer L.S."/>
            <person name="Danhauser K."/>
            <person name="Herebian D."/>
            <person name="Petkovic Ramadza D."/>
            <person name="Piekutowska-Abramczuk D."/>
            <person name="Seibt A."/>
            <person name="Mueller-Felber W."/>
            <person name="Haack T.B."/>
            <person name="Ploski R."/>
            <person name="Lohmeier K."/>
            <person name="Schneider D."/>
            <person name="Klee D."/>
            <person name="Rokicki D."/>
            <person name="Mayatepek E."/>
            <person name="Strom T.M."/>
            <person name="Meitinger T."/>
            <person name="Klopstock T."/>
            <person name="Pronicka E."/>
            <person name="Mayr J.A."/>
            <person name="Baric I."/>
            <person name="Distelmaier F."/>
            <person name="Prokisch H."/>
        </authorList>
    </citation>
    <scope>INVOLVEMENT IN PEBEL1</scope>
    <scope>VARIANTS PEBEL1 VAL-218 AND LYS-270 DEL</scope>
    <scope>FUNCTION</scope>
    <scope>CATALYTIC ACTIVITY</scope>
</reference>
<reference key="9">
    <citation type="journal article" date="2016" name="Neurogenetics">
        <title>Homozygous mutation in the APOA1BP is associated with a lethal infantile leukoencephalopathy.</title>
        <authorList>
            <person name="Spiegel R."/>
            <person name="Shaag A."/>
            <person name="Shalev S."/>
            <person name="Elpeleg O."/>
        </authorList>
    </citation>
    <scope>VARIANT PEBEL1 ASP-94</scope>
</reference>
<reference key="10">
    <citation type="journal article" date="2021" name="Am. J. Hum. Genet.">
        <title>Progressive myoclonus epilepsies-Residual unsolved cases have marked genetic heterogeneity including dolichol-dependent protein glycosylation pathway genes.</title>
        <authorList>
            <person name="Courage C."/>
            <person name="Oliver K.L."/>
            <person name="Park E.J."/>
            <person name="Cameron J.M."/>
            <person name="Grabinska K.A."/>
            <person name="Muona M."/>
            <person name="Canafoglia L."/>
            <person name="Gambardella A."/>
            <person name="Said E."/>
            <person name="Afawi Z."/>
            <person name="Baykan B."/>
            <person name="Brandt C."/>
            <person name="di Bonaventura C."/>
            <person name="Chew H.B."/>
            <person name="Criscuolo C."/>
            <person name="Dibbens L.M."/>
            <person name="Castellotti B."/>
            <person name="Riguzzi P."/>
            <person name="Labate A."/>
            <person name="Filla A."/>
            <person name="Giallonardo A.T."/>
            <person name="Berecki G."/>
            <person name="Jackson C.B."/>
            <person name="Joensuu T."/>
            <person name="Damiano J.A."/>
            <person name="Kivity S."/>
            <person name="Korczyn A."/>
            <person name="Palotie A."/>
            <person name="Striano P."/>
            <person name="Uccellini D."/>
            <person name="Giuliano L."/>
            <person name="Andermann E."/>
            <person name="Scheffer I.E."/>
            <person name="Michelucci R."/>
            <person name="Bahlo M."/>
            <person name="Franceschetti S."/>
            <person name="Sessa W.C."/>
            <person name="Berkovic S.F."/>
            <person name="Lehesjoki A.E."/>
        </authorList>
    </citation>
    <scope>VARIANT 43-SER--GLN-288 DEL</scope>
</reference>